<feature type="chain" id="PRO_0000058904" description="Serine/threonine-protein phosphatase BSU1">
    <location>
        <begin position="1"/>
        <end position="793"/>
    </location>
</feature>
<feature type="repeat" description="Kelch 1">
    <location>
        <begin position="53"/>
        <end position="109"/>
    </location>
</feature>
<feature type="repeat" description="Kelch 2">
    <location>
        <begin position="110"/>
        <end position="160"/>
    </location>
</feature>
<feature type="repeat" description="Kelch 3">
    <location>
        <begin position="214"/>
        <end position="262"/>
    </location>
</feature>
<feature type="repeat" description="Kelch 4">
    <location>
        <begin position="264"/>
        <end position="314"/>
    </location>
</feature>
<feature type="repeat" description="Kelch 5">
    <location>
        <begin position="329"/>
        <end position="388"/>
    </location>
</feature>
<feature type="active site" description="Proton donor" evidence="1">
    <location>
        <position position="577"/>
    </location>
</feature>
<feature type="binding site" evidence="1">
    <location>
        <position position="510"/>
    </location>
    <ligand>
        <name>Mn(2+)</name>
        <dbReference type="ChEBI" id="CHEBI:29035"/>
        <label>1</label>
    </ligand>
</feature>
<feature type="binding site" evidence="1">
    <location>
        <position position="512"/>
    </location>
    <ligand>
        <name>Mn(2+)</name>
        <dbReference type="ChEBI" id="CHEBI:29035"/>
        <label>1</label>
    </ligand>
</feature>
<feature type="binding site" evidence="1">
    <location>
        <position position="544"/>
    </location>
    <ligand>
        <name>Mn(2+)</name>
        <dbReference type="ChEBI" id="CHEBI:29035"/>
        <label>1</label>
    </ligand>
</feature>
<feature type="binding site" evidence="1">
    <location>
        <position position="544"/>
    </location>
    <ligand>
        <name>Mn(2+)</name>
        <dbReference type="ChEBI" id="CHEBI:29035"/>
        <label>2</label>
    </ligand>
</feature>
<feature type="binding site" evidence="1">
    <location>
        <position position="576"/>
    </location>
    <ligand>
        <name>Mn(2+)</name>
        <dbReference type="ChEBI" id="CHEBI:29035"/>
        <label>2</label>
    </ligand>
</feature>
<feature type="binding site" evidence="1">
    <location>
        <position position="629"/>
    </location>
    <ligand>
        <name>Mn(2+)</name>
        <dbReference type="ChEBI" id="CHEBI:29035"/>
        <label>2</label>
    </ligand>
</feature>
<feature type="binding site" evidence="1">
    <location>
        <position position="707"/>
    </location>
    <ligand>
        <name>Mn(2+)</name>
        <dbReference type="ChEBI" id="CHEBI:29035"/>
        <label>2</label>
    </ligand>
</feature>
<feature type="modified residue" description="Phosphoserine" evidence="3">
    <location>
        <position position="395"/>
    </location>
</feature>
<feature type="modified residue" description="Phosphoserine" evidence="3">
    <location>
        <position position="444"/>
    </location>
</feature>
<feature type="modified residue" description="Phosphoserine" evidence="3">
    <location>
        <position position="764"/>
    </location>
</feature>
<reference key="1">
    <citation type="journal article" date="2004" name="Genes Dev.">
        <title>Nuclear protein phosphatases with Kelch-repeat domains modulate the response to brassinosteroids in Arabidopsis.</title>
        <authorList>
            <person name="Mora-Garcia S."/>
            <person name="Vert G."/>
            <person name="Yin Y."/>
            <person name="Cano-Delgado A."/>
            <person name="Cheong H."/>
            <person name="Chory J."/>
        </authorList>
    </citation>
    <scope>NUCLEOTIDE SEQUENCE [MRNA]</scope>
    <scope>FUNCTION</scope>
    <scope>ENZYME ACTIVITY</scope>
    <scope>SUBCELLULAR LOCATION</scope>
    <scope>TISSUE SPECIFICITY</scope>
</reference>
<reference key="2">
    <citation type="journal article" date="2000" name="Nature">
        <title>Sequence and analysis of chromosome 1 of the plant Arabidopsis thaliana.</title>
        <authorList>
            <person name="Theologis A."/>
            <person name="Ecker J.R."/>
            <person name="Palm C.J."/>
            <person name="Federspiel N.A."/>
            <person name="Kaul S."/>
            <person name="White O."/>
            <person name="Alonso J."/>
            <person name="Altafi H."/>
            <person name="Araujo R."/>
            <person name="Bowman C.L."/>
            <person name="Brooks S.Y."/>
            <person name="Buehler E."/>
            <person name="Chan A."/>
            <person name="Chao Q."/>
            <person name="Chen H."/>
            <person name="Cheuk R.F."/>
            <person name="Chin C.W."/>
            <person name="Chung M.K."/>
            <person name="Conn L."/>
            <person name="Conway A.B."/>
            <person name="Conway A.R."/>
            <person name="Creasy T.H."/>
            <person name="Dewar K."/>
            <person name="Dunn P."/>
            <person name="Etgu P."/>
            <person name="Feldblyum T.V."/>
            <person name="Feng J.-D."/>
            <person name="Fong B."/>
            <person name="Fujii C.Y."/>
            <person name="Gill J.E."/>
            <person name="Goldsmith A.D."/>
            <person name="Haas B."/>
            <person name="Hansen N.F."/>
            <person name="Hughes B."/>
            <person name="Huizar L."/>
            <person name="Hunter J.L."/>
            <person name="Jenkins J."/>
            <person name="Johnson-Hopson C."/>
            <person name="Khan S."/>
            <person name="Khaykin E."/>
            <person name="Kim C.J."/>
            <person name="Koo H.L."/>
            <person name="Kremenetskaia I."/>
            <person name="Kurtz D.B."/>
            <person name="Kwan A."/>
            <person name="Lam B."/>
            <person name="Langin-Hooper S."/>
            <person name="Lee A."/>
            <person name="Lee J.M."/>
            <person name="Lenz C.A."/>
            <person name="Li J.H."/>
            <person name="Li Y.-P."/>
            <person name="Lin X."/>
            <person name="Liu S.X."/>
            <person name="Liu Z.A."/>
            <person name="Luros J.S."/>
            <person name="Maiti R."/>
            <person name="Marziali A."/>
            <person name="Militscher J."/>
            <person name="Miranda M."/>
            <person name="Nguyen M."/>
            <person name="Nierman W.C."/>
            <person name="Osborne B.I."/>
            <person name="Pai G."/>
            <person name="Peterson J."/>
            <person name="Pham P.K."/>
            <person name="Rizzo M."/>
            <person name="Rooney T."/>
            <person name="Rowley D."/>
            <person name="Sakano H."/>
            <person name="Salzberg S.L."/>
            <person name="Schwartz J.R."/>
            <person name="Shinn P."/>
            <person name="Southwick A.M."/>
            <person name="Sun H."/>
            <person name="Tallon L.J."/>
            <person name="Tambunga G."/>
            <person name="Toriumi M.J."/>
            <person name="Town C.D."/>
            <person name="Utterback T."/>
            <person name="Van Aken S."/>
            <person name="Vaysberg M."/>
            <person name="Vysotskaia V.S."/>
            <person name="Walker M."/>
            <person name="Wu D."/>
            <person name="Yu G."/>
            <person name="Fraser C.M."/>
            <person name="Venter J.C."/>
            <person name="Davis R.W."/>
        </authorList>
    </citation>
    <scope>NUCLEOTIDE SEQUENCE [LARGE SCALE GENOMIC DNA]</scope>
    <source>
        <strain>cv. Columbia</strain>
    </source>
</reference>
<reference key="3">
    <citation type="journal article" date="2017" name="Plant J.">
        <title>Araport11: a complete reannotation of the Arabidopsis thaliana reference genome.</title>
        <authorList>
            <person name="Cheng C.Y."/>
            <person name="Krishnakumar V."/>
            <person name="Chan A.P."/>
            <person name="Thibaud-Nissen F."/>
            <person name="Schobel S."/>
            <person name="Town C.D."/>
        </authorList>
    </citation>
    <scope>GENOME REANNOTATION</scope>
    <source>
        <strain>cv. Columbia</strain>
    </source>
</reference>
<reference key="4">
    <citation type="journal article" date="2007" name="Trends Plant Sci.">
        <title>Arabidopsis PPP family of serine/threonine phosphatases.</title>
        <authorList>
            <person name="Farkas I."/>
            <person name="Dombradi V."/>
            <person name="Miskei M."/>
            <person name="Szabados L."/>
            <person name="Koncz C."/>
        </authorList>
    </citation>
    <scope>GENE FAMILY</scope>
    <scope>NOMENCLATURE</scope>
</reference>
<reference key="5">
    <citation type="journal article" date="2011" name="Mol. Cell">
        <title>The CDG1 kinase mediates brassinosteroid signal transduction from BRI1 receptor kinase to BSU1 phosphatase and GSK3-like kinase BIN2.</title>
        <authorList>
            <person name="Kim T.W."/>
            <person name="Guan S."/>
            <person name="Burlingame A.L."/>
            <person name="Wang Z.Y."/>
        </authorList>
    </citation>
    <scope>FUNCTION</scope>
    <scope>ACTIVITY REGULATION</scope>
    <scope>INTERACTION WITH CDG1; CDL1 AND ASK7/BIN2</scope>
    <scope>PHOSPHORYLATION AT SER-395; SER-444 AND SER-764</scope>
</reference>
<sequence>MAPDQSYQYPSPSYESIQTFYDTDEDWPGPRCGHTLTAVFVNNSHQLILFGGSTTAVANHNSSLPEISLDGVTNSVHSFDVLTRKWTRLNPIGDVPSPRACHAAALYGTLILIQGGIGPSGPSDGDVYMLDMTNNKWIKFLVGGETPSPRYGHVMDIAAQRWLVIFSGNNGNEILDDTWALDTRGPFSWDRLNPSGNQPSGRMYASGSSREDGIFLLCGGIDHSGVTLGDTYGLKMDSDNVWTPVPAVAPSPRYQHTAVFGGSKLHVIGGILNRARLIDGEAVVAVLDTETGEWVDTNQPETSASGANRQNQYQLMRRCHHAAASFGSHLYVHGGIREDVLLDDLLVAETSQSSSPEPEEDNPDNYMLLDDYLMDEPKPLSSEPEASSFIMRSTSEIAMDRLAEAHNLPTIENAFYDSAIEGYVPLQHGAETVGNRGGLVRTASLDQSTQDLHKKVISTLLRPKTWTPPANRDFFLSYLEVKHLCDEVEKIFMNEPTLLQLKVPIKVFGDIHGQYGDLMRLFHEYGHPSVEGDITHIDYLFLGDYVDRGQHSLEIIMLLFALKIEYPKNIHLIRGNHESLAMNRIYGFLTECEERMGESYGFEAWLKINQVFDYLPLAALLEKKVLCVHGGIGRAVTIEEIENIERPAFPDTGSMVLKDILWSDPTMNDTVLGIVDNARGEGVVSFGPDIVKAFLERNGLEMILRAHECVIDGFERFADGRLITVFSATNYCGTAQNAGAILVIGRDMVIYPKLIHPHPPPISSSEEDYTDKAWMQELNIEMPPTPARGESSE</sequence>
<dbReference type="EC" id="3.1.3.16"/>
<dbReference type="EMBL" id="AY372269">
    <property type="protein sequence ID" value="AAR19789.1"/>
    <property type="molecule type" value="mRNA"/>
</dbReference>
<dbReference type="EMBL" id="AC002560">
    <property type="protein sequence ID" value="AAF86539.1"/>
    <property type="status" value="ALT_SEQ"/>
    <property type="molecule type" value="Genomic_DNA"/>
</dbReference>
<dbReference type="EMBL" id="CP002684">
    <property type="protein sequence ID" value="AEE27572.1"/>
    <property type="molecule type" value="Genomic_DNA"/>
</dbReference>
<dbReference type="RefSeq" id="NP_171844.6">
    <property type="nucleotide sequence ID" value="NM_100227.6"/>
</dbReference>
<dbReference type="SMR" id="Q9LR78"/>
<dbReference type="BioGRID" id="24043">
    <property type="interactions" value="4"/>
</dbReference>
<dbReference type="FunCoup" id="Q9LR78">
    <property type="interactions" value="289"/>
</dbReference>
<dbReference type="STRING" id="3702.Q9LR78"/>
<dbReference type="GlyGen" id="Q9LR78">
    <property type="glycosylation" value="1 site"/>
</dbReference>
<dbReference type="iPTMnet" id="Q9LR78"/>
<dbReference type="PaxDb" id="3702-AT1G03445.1"/>
<dbReference type="ProteomicsDB" id="239132"/>
<dbReference type="EnsemblPlants" id="AT1G03445.1">
    <property type="protein sequence ID" value="AT1G03445.1"/>
    <property type="gene ID" value="AT1G03445"/>
</dbReference>
<dbReference type="GeneID" id="838804"/>
<dbReference type="Gramene" id="AT1G03445.1">
    <property type="protein sequence ID" value="AT1G03445.1"/>
    <property type="gene ID" value="AT1G03445"/>
</dbReference>
<dbReference type="KEGG" id="ath:AT1G03445"/>
<dbReference type="Araport" id="AT1G03445"/>
<dbReference type="TAIR" id="AT1G03445">
    <property type="gene designation" value="BSU1"/>
</dbReference>
<dbReference type="eggNOG" id="KOG0374">
    <property type="taxonomic scope" value="Eukaryota"/>
</dbReference>
<dbReference type="eggNOG" id="KOG0379">
    <property type="taxonomic scope" value="Eukaryota"/>
</dbReference>
<dbReference type="HOGENOM" id="CLU_004962_7_1_1"/>
<dbReference type="InParanoid" id="Q9LR78"/>
<dbReference type="OMA" id="NERGSHI"/>
<dbReference type="PhylomeDB" id="Q9LR78"/>
<dbReference type="PRO" id="PR:Q9LR78"/>
<dbReference type="Proteomes" id="UP000006548">
    <property type="component" value="Chromosome 1"/>
</dbReference>
<dbReference type="ExpressionAtlas" id="Q9LR78">
    <property type="expression patterns" value="baseline and differential"/>
</dbReference>
<dbReference type="GO" id="GO:0005634">
    <property type="term" value="C:nucleus"/>
    <property type="evidence" value="ECO:0000314"/>
    <property type="project" value="TAIR"/>
</dbReference>
<dbReference type="GO" id="GO:0005886">
    <property type="term" value="C:plasma membrane"/>
    <property type="evidence" value="ECO:0000314"/>
    <property type="project" value="UniProtKB"/>
</dbReference>
<dbReference type="GO" id="GO:0046872">
    <property type="term" value="F:metal ion binding"/>
    <property type="evidence" value="ECO:0007669"/>
    <property type="project" value="UniProtKB-KW"/>
</dbReference>
<dbReference type="GO" id="GO:0004722">
    <property type="term" value="F:protein serine/threonine phosphatase activity"/>
    <property type="evidence" value="ECO:0000314"/>
    <property type="project" value="TAIR"/>
</dbReference>
<dbReference type="GO" id="GO:0009742">
    <property type="term" value="P:brassinosteroid mediated signaling pathway"/>
    <property type="evidence" value="ECO:0007669"/>
    <property type="project" value="InterPro"/>
</dbReference>
<dbReference type="GO" id="GO:1900459">
    <property type="term" value="P:positive regulation of brassinosteroid mediated signaling pathway"/>
    <property type="evidence" value="ECO:0000315"/>
    <property type="project" value="UniProtKB"/>
</dbReference>
<dbReference type="GO" id="GO:0032880">
    <property type="term" value="P:regulation of protein localization"/>
    <property type="evidence" value="ECO:0000314"/>
    <property type="project" value="TAIR"/>
</dbReference>
<dbReference type="FunFam" id="3.60.21.10:FF:000008">
    <property type="entry name" value="Serine/threonine-protein phosphatase"/>
    <property type="match status" value="1"/>
</dbReference>
<dbReference type="Gene3D" id="3.60.21.10">
    <property type="match status" value="1"/>
</dbReference>
<dbReference type="Gene3D" id="2.120.10.80">
    <property type="entry name" value="Kelch-type beta propeller"/>
    <property type="match status" value="2"/>
</dbReference>
<dbReference type="InterPro" id="IPR004843">
    <property type="entry name" value="Calcineurin-like_PHP_ApaH"/>
</dbReference>
<dbReference type="InterPro" id="IPR015915">
    <property type="entry name" value="Kelch-typ_b-propeller"/>
</dbReference>
<dbReference type="InterPro" id="IPR011498">
    <property type="entry name" value="Kelch_2"/>
</dbReference>
<dbReference type="InterPro" id="IPR029052">
    <property type="entry name" value="Metallo-depent_PP-like"/>
</dbReference>
<dbReference type="InterPro" id="IPR006186">
    <property type="entry name" value="Ser/Thr-sp_prot-phosphatase"/>
</dbReference>
<dbReference type="InterPro" id="IPR012391">
    <property type="entry name" value="Ser/Thr_prot_Pase_BSU1"/>
</dbReference>
<dbReference type="InterPro" id="IPR031675">
    <property type="entry name" value="STPPase_N"/>
</dbReference>
<dbReference type="PANTHER" id="PTHR46422">
    <property type="entry name" value="SERINE/THREONINE-PROTEIN PHOSPHATASE BSL3"/>
    <property type="match status" value="1"/>
</dbReference>
<dbReference type="PANTHER" id="PTHR46422:SF7">
    <property type="entry name" value="SERINE_THREONINE-PROTEIN PHOSPHATASE BSL2-RELATED"/>
    <property type="match status" value="1"/>
</dbReference>
<dbReference type="Pfam" id="PF07646">
    <property type="entry name" value="Kelch_2"/>
    <property type="match status" value="1"/>
</dbReference>
<dbReference type="Pfam" id="PF24681">
    <property type="entry name" value="Kelch_KLHDC2_KLHL20_DRC7"/>
    <property type="match status" value="1"/>
</dbReference>
<dbReference type="Pfam" id="PF00149">
    <property type="entry name" value="Metallophos"/>
    <property type="match status" value="1"/>
</dbReference>
<dbReference type="Pfam" id="PF16891">
    <property type="entry name" value="STPPase_N"/>
    <property type="match status" value="1"/>
</dbReference>
<dbReference type="PIRSF" id="PIRSF036363">
    <property type="entry name" value="PPP_BSU1"/>
    <property type="match status" value="1"/>
</dbReference>
<dbReference type="PRINTS" id="PR00114">
    <property type="entry name" value="STPHPHTASE"/>
</dbReference>
<dbReference type="SMART" id="SM00156">
    <property type="entry name" value="PP2Ac"/>
    <property type="match status" value="1"/>
</dbReference>
<dbReference type="SUPFAM" id="SSF117281">
    <property type="entry name" value="Kelch motif"/>
    <property type="match status" value="1"/>
</dbReference>
<dbReference type="SUPFAM" id="SSF56300">
    <property type="entry name" value="Metallo-dependent phosphatases"/>
    <property type="match status" value="1"/>
</dbReference>
<dbReference type="PROSITE" id="PS00125">
    <property type="entry name" value="SER_THR_PHOSPHATASE"/>
    <property type="match status" value="1"/>
</dbReference>
<comment type="function">
    <text evidence="2 3">Phosphatase that acts as a positive regulator of brassinosteroid (BR) signaling (PubMed:14977918, PubMed:21855796). Dephosphorylates BES1, a transcription factor that regulates the expression of BR-response genes, thereby playing an important role in the regulation of response to BRs (PubMed:14977918). Inactivates the negative regulator of BR signaling ASK7/BIN2 by dephosphorylation at 'Tyr-200' (PubMed:21855796).</text>
</comment>
<comment type="catalytic activity">
    <reaction evidence="2">
        <text>O-phospho-L-seryl-[protein] + H2O = L-seryl-[protein] + phosphate</text>
        <dbReference type="Rhea" id="RHEA:20629"/>
        <dbReference type="Rhea" id="RHEA-COMP:9863"/>
        <dbReference type="Rhea" id="RHEA-COMP:11604"/>
        <dbReference type="ChEBI" id="CHEBI:15377"/>
        <dbReference type="ChEBI" id="CHEBI:29999"/>
        <dbReference type="ChEBI" id="CHEBI:43474"/>
        <dbReference type="ChEBI" id="CHEBI:83421"/>
        <dbReference type="EC" id="3.1.3.16"/>
    </reaction>
</comment>
<comment type="catalytic activity">
    <reaction evidence="2">
        <text>O-phospho-L-threonyl-[protein] + H2O = L-threonyl-[protein] + phosphate</text>
        <dbReference type="Rhea" id="RHEA:47004"/>
        <dbReference type="Rhea" id="RHEA-COMP:11060"/>
        <dbReference type="Rhea" id="RHEA-COMP:11605"/>
        <dbReference type="ChEBI" id="CHEBI:15377"/>
        <dbReference type="ChEBI" id="CHEBI:30013"/>
        <dbReference type="ChEBI" id="CHEBI:43474"/>
        <dbReference type="ChEBI" id="CHEBI:61977"/>
        <dbReference type="EC" id="3.1.3.16"/>
    </reaction>
</comment>
<comment type="cofactor">
    <cofactor evidence="1">
        <name>Mn(2+)</name>
        <dbReference type="ChEBI" id="CHEBI:29035"/>
    </cofactor>
    <text evidence="1">Binds 2 manganese ions per subunit.</text>
</comment>
<comment type="activity regulation">
    <text evidence="3">Activated by phosphorylation at Ser-764 by CDG1.</text>
</comment>
<comment type="subunit">
    <text evidence="3">Interacts with CDG1, CDL1 and ASK7/BIN2.</text>
</comment>
<comment type="subcellular location">
    <subcellularLocation>
        <location evidence="2">Nucleus</location>
    </subcellularLocation>
</comment>
<comment type="tissue specificity">
    <text evidence="2">Mainly expressed in young, elongating tissues. In young seedlings, it is expressed at the base of the hypocotyl, at the tip and most peripheral cell layers of cotyledons, and in the vascular cylinder of roots, particularly in the elongation zone and at the point of emergence of lateral roots. In mature plants, it is still present in the root vasculature, but almost completely absent in fully expanded stems and leaves. In flowers, it is mainly expressed in sepal veins, anther filaments, and in the style, suggesting that BSU1 is expressed in actively growing regions and apparently enriched in vascular tissues.</text>
</comment>
<comment type="PTM">
    <text evidence="3">Phosphorylated at Ser-395 and Ser-444. Phosphorylated at Ser-764 by CDG1 and CDL1.</text>
</comment>
<comment type="similarity">
    <text evidence="4">Belongs to the PPP phosphatase family. BSU subfamily.</text>
</comment>
<comment type="sequence caution" evidence="4">
    <conflict type="erroneous gene model prediction">
        <sequence resource="EMBL-CDS" id="AAF86539"/>
    </conflict>
</comment>
<protein>
    <recommendedName>
        <fullName>Serine/threonine-protein phosphatase BSU1</fullName>
        <ecNumber>3.1.3.16</ecNumber>
    </recommendedName>
    <alternativeName>
        <fullName>Bri1 suppressor protein 1</fullName>
    </alternativeName>
</protein>
<accession>Q9LR78</accession>
<keyword id="KW-0378">Hydrolase</keyword>
<keyword id="KW-0880">Kelch repeat</keyword>
<keyword id="KW-0464">Manganese</keyword>
<keyword id="KW-0479">Metal-binding</keyword>
<keyword id="KW-0539">Nucleus</keyword>
<keyword id="KW-0597">Phosphoprotein</keyword>
<keyword id="KW-0904">Protein phosphatase</keyword>
<keyword id="KW-1185">Reference proteome</keyword>
<keyword id="KW-0677">Repeat</keyword>
<evidence type="ECO:0000250" key="1"/>
<evidence type="ECO:0000269" key="2">
    <source>
    </source>
</evidence>
<evidence type="ECO:0000269" key="3">
    <source>
    </source>
</evidence>
<evidence type="ECO:0000305" key="4"/>
<name>BSU1_ARATH</name>
<organism>
    <name type="scientific">Arabidopsis thaliana</name>
    <name type="common">Mouse-ear cress</name>
    <dbReference type="NCBI Taxonomy" id="3702"/>
    <lineage>
        <taxon>Eukaryota</taxon>
        <taxon>Viridiplantae</taxon>
        <taxon>Streptophyta</taxon>
        <taxon>Embryophyta</taxon>
        <taxon>Tracheophyta</taxon>
        <taxon>Spermatophyta</taxon>
        <taxon>Magnoliopsida</taxon>
        <taxon>eudicotyledons</taxon>
        <taxon>Gunneridae</taxon>
        <taxon>Pentapetalae</taxon>
        <taxon>rosids</taxon>
        <taxon>malvids</taxon>
        <taxon>Brassicales</taxon>
        <taxon>Brassicaceae</taxon>
        <taxon>Camelineae</taxon>
        <taxon>Arabidopsis</taxon>
    </lineage>
</organism>
<gene>
    <name type="primary">BSU1</name>
    <name type="ordered locus">At1g03445</name>
    <name type="ORF">F21B7.7</name>
</gene>
<proteinExistence type="evidence at protein level"/>